<accession>B2S678</accession>
<dbReference type="EMBL" id="CP000887">
    <property type="protein sequence ID" value="ACD72675.1"/>
    <property type="molecule type" value="Genomic_DNA"/>
</dbReference>
<dbReference type="RefSeq" id="WP_002964361.1">
    <property type="nucleotide sequence ID" value="NC_010742.1"/>
</dbReference>
<dbReference type="SMR" id="B2S678"/>
<dbReference type="GeneID" id="93016440"/>
<dbReference type="KEGG" id="bmc:BAbS19_I11700"/>
<dbReference type="HOGENOM" id="CLU_041575_5_1_5"/>
<dbReference type="Proteomes" id="UP000002565">
    <property type="component" value="Chromosome 1"/>
</dbReference>
<dbReference type="GO" id="GO:1990904">
    <property type="term" value="C:ribonucleoprotein complex"/>
    <property type="evidence" value="ECO:0007669"/>
    <property type="project" value="UniProtKB-KW"/>
</dbReference>
<dbReference type="GO" id="GO:0005840">
    <property type="term" value="C:ribosome"/>
    <property type="evidence" value="ECO:0007669"/>
    <property type="project" value="UniProtKB-KW"/>
</dbReference>
<dbReference type="GO" id="GO:0019843">
    <property type="term" value="F:rRNA binding"/>
    <property type="evidence" value="ECO:0007669"/>
    <property type="project" value="UniProtKB-UniRule"/>
</dbReference>
<dbReference type="GO" id="GO:0003735">
    <property type="term" value="F:structural constituent of ribosome"/>
    <property type="evidence" value="ECO:0007669"/>
    <property type="project" value="InterPro"/>
</dbReference>
<dbReference type="GO" id="GO:0006412">
    <property type="term" value="P:translation"/>
    <property type="evidence" value="ECO:0007669"/>
    <property type="project" value="UniProtKB-UniRule"/>
</dbReference>
<dbReference type="Gene3D" id="3.40.1370.10">
    <property type="match status" value="1"/>
</dbReference>
<dbReference type="HAMAP" id="MF_01328_B">
    <property type="entry name" value="Ribosomal_uL4_B"/>
    <property type="match status" value="1"/>
</dbReference>
<dbReference type="InterPro" id="IPR002136">
    <property type="entry name" value="Ribosomal_uL4"/>
</dbReference>
<dbReference type="InterPro" id="IPR013005">
    <property type="entry name" value="Ribosomal_uL4-like"/>
</dbReference>
<dbReference type="InterPro" id="IPR023574">
    <property type="entry name" value="Ribosomal_uL4_dom_sf"/>
</dbReference>
<dbReference type="NCBIfam" id="TIGR03953">
    <property type="entry name" value="rplD_bact"/>
    <property type="match status" value="1"/>
</dbReference>
<dbReference type="PANTHER" id="PTHR10746">
    <property type="entry name" value="50S RIBOSOMAL PROTEIN L4"/>
    <property type="match status" value="1"/>
</dbReference>
<dbReference type="PANTHER" id="PTHR10746:SF6">
    <property type="entry name" value="LARGE RIBOSOMAL SUBUNIT PROTEIN UL4M"/>
    <property type="match status" value="1"/>
</dbReference>
<dbReference type="Pfam" id="PF00573">
    <property type="entry name" value="Ribosomal_L4"/>
    <property type="match status" value="1"/>
</dbReference>
<dbReference type="SUPFAM" id="SSF52166">
    <property type="entry name" value="Ribosomal protein L4"/>
    <property type="match status" value="1"/>
</dbReference>
<name>RL4_BRUA1</name>
<reference key="1">
    <citation type="journal article" date="2008" name="PLoS ONE">
        <title>Genome sequence of Brucella abortus vaccine strain S19 compared to virulent strains yields candidate virulence genes.</title>
        <authorList>
            <person name="Crasta O.R."/>
            <person name="Folkerts O."/>
            <person name="Fei Z."/>
            <person name="Mane S.P."/>
            <person name="Evans C."/>
            <person name="Martino-Catt S."/>
            <person name="Bricker B."/>
            <person name="Yu G."/>
            <person name="Du L."/>
            <person name="Sobral B.W."/>
        </authorList>
    </citation>
    <scope>NUCLEOTIDE SEQUENCE [LARGE SCALE GENOMIC DNA]</scope>
    <source>
        <strain>S19</strain>
    </source>
</reference>
<evidence type="ECO:0000255" key="1">
    <source>
        <dbReference type="HAMAP-Rule" id="MF_01328"/>
    </source>
</evidence>
<evidence type="ECO:0000256" key="2">
    <source>
        <dbReference type="SAM" id="MobiDB-lite"/>
    </source>
</evidence>
<evidence type="ECO:0000305" key="3"/>
<gene>
    <name evidence="1" type="primary">rplD</name>
    <name type="ordered locus">BAbS19_I11700</name>
</gene>
<sequence length="206" mass="22561">MDLTITTLEGKDAGKVKLNEEIFGLDPRDDILQRVVRWQLARRQQGSHKAQGRGDVSRTGSKMYKQKGTGRARHHSARAPQFRGGGQAHGPVVRNHDHDLPKKVRALGLRHALSAKAKASDLIIIDDLASADAKTKQLVSQFAKLGLENALLIGGAEIDANFQRAASNIPNIDVLPVQGINVYDILRRGKLVLSKAAVEALEERFK</sequence>
<protein>
    <recommendedName>
        <fullName evidence="1">Large ribosomal subunit protein uL4</fullName>
    </recommendedName>
    <alternativeName>
        <fullName evidence="3">50S ribosomal protein L4</fullName>
    </alternativeName>
</protein>
<feature type="chain" id="PRO_1000142088" description="Large ribosomal subunit protein uL4">
    <location>
        <begin position="1"/>
        <end position="206"/>
    </location>
</feature>
<feature type="region of interest" description="Disordered" evidence="2">
    <location>
        <begin position="42"/>
        <end position="94"/>
    </location>
</feature>
<feature type="compositionally biased region" description="Basic residues" evidence="2">
    <location>
        <begin position="64"/>
        <end position="77"/>
    </location>
</feature>
<proteinExistence type="inferred from homology"/>
<keyword id="KW-0687">Ribonucleoprotein</keyword>
<keyword id="KW-0689">Ribosomal protein</keyword>
<keyword id="KW-0694">RNA-binding</keyword>
<keyword id="KW-0699">rRNA-binding</keyword>
<comment type="function">
    <text evidence="1">One of the primary rRNA binding proteins, this protein initially binds near the 5'-end of the 23S rRNA. It is important during the early stages of 50S assembly. It makes multiple contacts with different domains of the 23S rRNA in the assembled 50S subunit and ribosome.</text>
</comment>
<comment type="function">
    <text evidence="1">Forms part of the polypeptide exit tunnel.</text>
</comment>
<comment type="subunit">
    <text evidence="1">Part of the 50S ribosomal subunit.</text>
</comment>
<comment type="similarity">
    <text evidence="1">Belongs to the universal ribosomal protein uL4 family.</text>
</comment>
<organism>
    <name type="scientific">Brucella abortus (strain S19)</name>
    <dbReference type="NCBI Taxonomy" id="430066"/>
    <lineage>
        <taxon>Bacteria</taxon>
        <taxon>Pseudomonadati</taxon>
        <taxon>Pseudomonadota</taxon>
        <taxon>Alphaproteobacteria</taxon>
        <taxon>Hyphomicrobiales</taxon>
        <taxon>Brucellaceae</taxon>
        <taxon>Brucella/Ochrobactrum group</taxon>
        <taxon>Brucella</taxon>
    </lineage>
</organism>